<sequence>MDWLTILGISVALAMDAFAVALAAGAVISPITGRHLFRLGFHFGLFQALMPIGGWLLGMTVQKWISAYDHWIAFGLLAYVGGRMVHEAFEEDDEEKTPSDPTKGMTMVMLSVATSIDAFAVGLSIAMLGVSVWLPATVIGLVAGVLTVAGMLLGRRLGEKWGKRVEICGGLVLCLIGLKILLEHTLLK</sequence>
<accession>B5E9H5</accession>
<keyword id="KW-0997">Cell inner membrane</keyword>
<keyword id="KW-1003">Cell membrane</keyword>
<keyword id="KW-0406">Ion transport</keyword>
<keyword id="KW-0464">Manganese</keyword>
<keyword id="KW-0472">Membrane</keyword>
<keyword id="KW-1185">Reference proteome</keyword>
<keyword id="KW-0812">Transmembrane</keyword>
<keyword id="KW-1133">Transmembrane helix</keyword>
<keyword id="KW-0813">Transport</keyword>
<gene>
    <name evidence="1" type="primary">mntP</name>
    <name type="ordered locus">Gbem_1700</name>
</gene>
<protein>
    <recommendedName>
        <fullName evidence="1">Putative manganese efflux pump MntP</fullName>
    </recommendedName>
</protein>
<proteinExistence type="inferred from homology"/>
<comment type="function">
    <text evidence="1">Probably functions as a manganese efflux pump.</text>
</comment>
<comment type="subcellular location">
    <subcellularLocation>
        <location evidence="1">Cell inner membrane</location>
        <topology evidence="1">Multi-pass membrane protein</topology>
    </subcellularLocation>
</comment>
<comment type="similarity">
    <text evidence="1">Belongs to the MntP (TC 9.B.29) family.</text>
</comment>
<name>MNTP_CITBB</name>
<reference key="1">
    <citation type="submission" date="2008-07" db="EMBL/GenBank/DDBJ databases">
        <title>Complete sequence of Geobacter bemidjiensis BEM.</title>
        <authorList>
            <consortium name="US DOE Joint Genome Institute"/>
            <person name="Lucas S."/>
            <person name="Copeland A."/>
            <person name="Lapidus A."/>
            <person name="Glavina del Rio T."/>
            <person name="Dalin E."/>
            <person name="Tice H."/>
            <person name="Bruce D."/>
            <person name="Goodwin L."/>
            <person name="Pitluck S."/>
            <person name="Kiss H."/>
            <person name="Brettin T."/>
            <person name="Detter J.C."/>
            <person name="Han C."/>
            <person name="Kuske C.R."/>
            <person name="Schmutz J."/>
            <person name="Larimer F."/>
            <person name="Land M."/>
            <person name="Hauser L."/>
            <person name="Kyrpides N."/>
            <person name="Lykidis A."/>
            <person name="Lovley D."/>
            <person name="Richardson P."/>
        </authorList>
    </citation>
    <scope>NUCLEOTIDE SEQUENCE [LARGE SCALE GENOMIC DNA]</scope>
    <source>
        <strain>ATCC BAA-1014 / DSM 16622 / JCM 12645 / Bem</strain>
    </source>
</reference>
<dbReference type="EMBL" id="CP001124">
    <property type="protein sequence ID" value="ACH38717.1"/>
    <property type="molecule type" value="Genomic_DNA"/>
</dbReference>
<dbReference type="RefSeq" id="WP_012530134.1">
    <property type="nucleotide sequence ID" value="NC_011146.1"/>
</dbReference>
<dbReference type="STRING" id="404380.Gbem_1700"/>
<dbReference type="KEGG" id="gbm:Gbem_1700"/>
<dbReference type="eggNOG" id="COG1971">
    <property type="taxonomic scope" value="Bacteria"/>
</dbReference>
<dbReference type="HOGENOM" id="CLU_096410_3_0_7"/>
<dbReference type="OrthoDB" id="9811590at2"/>
<dbReference type="Proteomes" id="UP000008825">
    <property type="component" value="Chromosome"/>
</dbReference>
<dbReference type="GO" id="GO:0005886">
    <property type="term" value="C:plasma membrane"/>
    <property type="evidence" value="ECO:0007669"/>
    <property type="project" value="UniProtKB-SubCell"/>
</dbReference>
<dbReference type="GO" id="GO:0005384">
    <property type="term" value="F:manganese ion transmembrane transporter activity"/>
    <property type="evidence" value="ECO:0007669"/>
    <property type="project" value="UniProtKB-UniRule"/>
</dbReference>
<dbReference type="HAMAP" id="MF_01521">
    <property type="entry name" value="MntP_pump"/>
    <property type="match status" value="1"/>
</dbReference>
<dbReference type="InterPro" id="IPR003810">
    <property type="entry name" value="Mntp/YtaF"/>
</dbReference>
<dbReference type="InterPro" id="IPR022929">
    <property type="entry name" value="Put_MntP"/>
</dbReference>
<dbReference type="PANTHER" id="PTHR35529">
    <property type="entry name" value="MANGANESE EFFLUX PUMP MNTP-RELATED"/>
    <property type="match status" value="1"/>
</dbReference>
<dbReference type="PANTHER" id="PTHR35529:SF1">
    <property type="entry name" value="MANGANESE EFFLUX PUMP MNTP-RELATED"/>
    <property type="match status" value="1"/>
</dbReference>
<dbReference type="Pfam" id="PF02659">
    <property type="entry name" value="Mntp"/>
    <property type="match status" value="1"/>
</dbReference>
<evidence type="ECO:0000255" key="1">
    <source>
        <dbReference type="HAMAP-Rule" id="MF_01521"/>
    </source>
</evidence>
<organism>
    <name type="scientific">Citrifermentans bemidjiense (strain ATCC BAA-1014 / DSM 16622 / JCM 12645 / Bem)</name>
    <name type="common">Geobacter bemidjiensis</name>
    <dbReference type="NCBI Taxonomy" id="404380"/>
    <lineage>
        <taxon>Bacteria</taxon>
        <taxon>Pseudomonadati</taxon>
        <taxon>Thermodesulfobacteriota</taxon>
        <taxon>Desulfuromonadia</taxon>
        <taxon>Geobacterales</taxon>
        <taxon>Geobacteraceae</taxon>
        <taxon>Citrifermentans</taxon>
    </lineage>
</organism>
<feature type="chain" id="PRO_1000200032" description="Putative manganese efflux pump MntP">
    <location>
        <begin position="1"/>
        <end position="188"/>
    </location>
</feature>
<feature type="transmembrane region" description="Helical" evidence="1">
    <location>
        <begin position="3"/>
        <end position="23"/>
    </location>
</feature>
<feature type="transmembrane region" description="Helical" evidence="1">
    <location>
        <begin position="39"/>
        <end position="59"/>
    </location>
</feature>
<feature type="transmembrane region" description="Helical" evidence="1">
    <location>
        <begin position="65"/>
        <end position="85"/>
    </location>
</feature>
<feature type="transmembrane region" description="Helical" evidence="1">
    <location>
        <begin position="104"/>
        <end position="124"/>
    </location>
</feature>
<feature type="transmembrane region" description="Helical" evidence="1">
    <location>
        <begin position="125"/>
        <end position="145"/>
    </location>
</feature>
<feature type="transmembrane region" description="Helical" evidence="1">
    <location>
        <begin position="167"/>
        <end position="187"/>
    </location>
</feature>